<gene>
    <name evidence="1" type="primary">treF</name>
    <name type="ordered locus">EFER_3502</name>
</gene>
<feature type="chain" id="PRO_1000136407" description="Cytoplasmic trehalase">
    <location>
        <begin position="1"/>
        <end position="549"/>
    </location>
</feature>
<feature type="active site" description="Proton donor/acceptor" evidence="1">
    <location>
        <position position="326"/>
    </location>
</feature>
<feature type="active site" description="Proton donor/acceptor" evidence="1">
    <location>
        <position position="509"/>
    </location>
</feature>
<feature type="binding site" evidence="1">
    <location>
        <position position="168"/>
    </location>
    <ligand>
        <name>substrate</name>
    </ligand>
</feature>
<feature type="binding site" evidence="1">
    <location>
        <begin position="175"/>
        <end position="176"/>
    </location>
    <ligand>
        <name>substrate</name>
    </ligand>
</feature>
<feature type="binding site" evidence="1">
    <location>
        <position position="212"/>
    </location>
    <ligand>
        <name>substrate</name>
    </ligand>
</feature>
<feature type="binding site" evidence="1">
    <location>
        <begin position="221"/>
        <end position="223"/>
    </location>
    <ligand>
        <name>substrate</name>
    </ligand>
</feature>
<feature type="binding site" evidence="1">
    <location>
        <begin position="292"/>
        <end position="294"/>
    </location>
    <ligand>
        <name>substrate</name>
    </ligand>
</feature>
<feature type="binding site" evidence="1">
    <location>
        <position position="324"/>
    </location>
    <ligand>
        <name>substrate</name>
    </ligand>
</feature>
<feature type="binding site" evidence="1">
    <location>
        <position position="525"/>
    </location>
    <ligand>
        <name>substrate</name>
    </ligand>
</feature>
<sequence length="549" mass="63712">MLNQKIQNPNPDELMIEIDLCYELDPYELKLDEMIEAEPEPEMIEGLPASDALTPADRYLELFEHVQSAKIFPDSKTFPDCAPKMDPLDILIRYRKVRRHRDFDLRQFVENHFWLPEVYSSEYVSNPENSLKEHIDQLWPVLTREPQDHIPWSSLLALPQSYIVPGGRFSETYYWDSYFTMLGLAESGREDLLKCMADNFAWMIENYGHIPNGNRTYYLSRSQPPVFALMVELFEEDGVRGARRYLDHLKMEYAFWMDGAESLIPNQAYRHVVRMPDGSLLNRYWDDRDTPRDESWLEDVETAKHSGRPPNEVYRDLRAGAASGWDYSSRWLRDAGRLASIRTTQFIPIDLNAFLFKLESAIANISALKGDKETETLFRQKANARRDAVNRYLWDDENGIYRDYDWRREQLALFSAAAIVPLYVGMASHEQADRLGDAVRNRLLTPGGILATEYETGEQWDKPNGWAPLQWMAIQGFKMYGDDHLGDEIAHSWLQTVNLFYQQHHKLIEKYHIAGGTPREGGGGEYPLQDGFGWTNGVVRRLISLYGEP</sequence>
<reference key="1">
    <citation type="journal article" date="2009" name="PLoS Genet.">
        <title>Organised genome dynamics in the Escherichia coli species results in highly diverse adaptive paths.</title>
        <authorList>
            <person name="Touchon M."/>
            <person name="Hoede C."/>
            <person name="Tenaillon O."/>
            <person name="Barbe V."/>
            <person name="Baeriswyl S."/>
            <person name="Bidet P."/>
            <person name="Bingen E."/>
            <person name="Bonacorsi S."/>
            <person name="Bouchier C."/>
            <person name="Bouvet O."/>
            <person name="Calteau A."/>
            <person name="Chiapello H."/>
            <person name="Clermont O."/>
            <person name="Cruveiller S."/>
            <person name="Danchin A."/>
            <person name="Diard M."/>
            <person name="Dossat C."/>
            <person name="Karoui M.E."/>
            <person name="Frapy E."/>
            <person name="Garry L."/>
            <person name="Ghigo J.M."/>
            <person name="Gilles A.M."/>
            <person name="Johnson J."/>
            <person name="Le Bouguenec C."/>
            <person name="Lescat M."/>
            <person name="Mangenot S."/>
            <person name="Martinez-Jehanne V."/>
            <person name="Matic I."/>
            <person name="Nassif X."/>
            <person name="Oztas S."/>
            <person name="Petit M.A."/>
            <person name="Pichon C."/>
            <person name="Rouy Z."/>
            <person name="Ruf C.S."/>
            <person name="Schneider D."/>
            <person name="Tourret J."/>
            <person name="Vacherie B."/>
            <person name="Vallenet D."/>
            <person name="Medigue C."/>
            <person name="Rocha E.P.C."/>
            <person name="Denamur E."/>
        </authorList>
    </citation>
    <scope>NUCLEOTIDE SEQUENCE [LARGE SCALE GENOMIC DNA]</scope>
    <source>
        <strain>ATCC 35469 / DSM 13698 / BCRC 15582 / CCUG 18766 / IAM 14443 / JCM 21226 / LMG 7866 / NBRC 102419 / NCTC 12128 / CDC 0568-73</strain>
    </source>
</reference>
<proteinExistence type="inferred from homology"/>
<name>TREF_ESCF3</name>
<comment type="function">
    <text evidence="1">Hydrolyzes trehalose to glucose. Could be involved, in cells returning to low osmolarity conditions, in the utilization of the accumulated cytoplasmic trehalose, which was synthesized in response to high osmolarity.</text>
</comment>
<comment type="catalytic activity">
    <reaction evidence="1">
        <text>alpha,alpha-trehalose + H2O = alpha-D-glucose + beta-D-glucose</text>
        <dbReference type="Rhea" id="RHEA:32675"/>
        <dbReference type="ChEBI" id="CHEBI:15377"/>
        <dbReference type="ChEBI" id="CHEBI:15903"/>
        <dbReference type="ChEBI" id="CHEBI:16551"/>
        <dbReference type="ChEBI" id="CHEBI:17925"/>
        <dbReference type="EC" id="3.2.1.28"/>
    </reaction>
</comment>
<comment type="pathway">
    <text evidence="1">Glycan degradation; trehalose degradation; D-glucose from alpha,alpha-trehalose: step 1/1.</text>
</comment>
<comment type="subunit">
    <text evidence="1">Monomer.</text>
</comment>
<comment type="subcellular location">
    <subcellularLocation>
        <location evidence="1">Cytoplasm</location>
    </subcellularLocation>
</comment>
<comment type="similarity">
    <text evidence="1">Belongs to the glycosyl hydrolase 37 family.</text>
</comment>
<accession>B7LSZ0</accession>
<dbReference type="EC" id="3.2.1.28" evidence="1"/>
<dbReference type="EMBL" id="CU928158">
    <property type="protein sequence ID" value="CAQ90979.1"/>
    <property type="molecule type" value="Genomic_DNA"/>
</dbReference>
<dbReference type="RefSeq" id="WP_000934198.1">
    <property type="nucleotide sequence ID" value="NC_011740.1"/>
</dbReference>
<dbReference type="SMR" id="B7LSZ0"/>
<dbReference type="CAZy" id="GH37">
    <property type="family name" value="Glycoside Hydrolase Family 37"/>
</dbReference>
<dbReference type="KEGG" id="efe:EFER_3502"/>
<dbReference type="HOGENOM" id="CLU_006451_3_1_6"/>
<dbReference type="OrthoDB" id="106887at2"/>
<dbReference type="UniPathway" id="UPA00300">
    <property type="reaction ID" value="UER00535"/>
</dbReference>
<dbReference type="Proteomes" id="UP000000745">
    <property type="component" value="Chromosome"/>
</dbReference>
<dbReference type="GO" id="GO:0005737">
    <property type="term" value="C:cytoplasm"/>
    <property type="evidence" value="ECO:0007669"/>
    <property type="project" value="UniProtKB-SubCell"/>
</dbReference>
<dbReference type="GO" id="GO:0004555">
    <property type="term" value="F:alpha,alpha-trehalase activity"/>
    <property type="evidence" value="ECO:0007669"/>
    <property type="project" value="UniProtKB-UniRule"/>
</dbReference>
<dbReference type="GO" id="GO:0071474">
    <property type="term" value="P:cellular hyperosmotic response"/>
    <property type="evidence" value="ECO:0007669"/>
    <property type="project" value="InterPro"/>
</dbReference>
<dbReference type="GO" id="GO:0005993">
    <property type="term" value="P:trehalose catabolic process"/>
    <property type="evidence" value="ECO:0007669"/>
    <property type="project" value="UniProtKB-UniRule"/>
</dbReference>
<dbReference type="FunFam" id="1.50.10.10:FF:000003">
    <property type="entry name" value="Cytoplasmic trehalase"/>
    <property type="match status" value="1"/>
</dbReference>
<dbReference type="Gene3D" id="1.50.10.10">
    <property type="match status" value="1"/>
</dbReference>
<dbReference type="HAMAP" id="MF_01059">
    <property type="entry name" value="Cyt_trehalase"/>
    <property type="match status" value="1"/>
</dbReference>
<dbReference type="InterPro" id="IPR008928">
    <property type="entry name" value="6-hairpin_glycosidase_sf"/>
</dbReference>
<dbReference type="InterPro" id="IPR012341">
    <property type="entry name" value="6hp_glycosidase-like_sf"/>
</dbReference>
<dbReference type="InterPro" id="IPR023715">
    <property type="entry name" value="Cyt_trehalase"/>
</dbReference>
<dbReference type="InterPro" id="IPR001661">
    <property type="entry name" value="Glyco_hydro_37"/>
</dbReference>
<dbReference type="InterPro" id="IPR018232">
    <property type="entry name" value="Glyco_hydro_37_CS"/>
</dbReference>
<dbReference type="NCBIfam" id="NF009773">
    <property type="entry name" value="PRK13270.1"/>
    <property type="match status" value="1"/>
</dbReference>
<dbReference type="NCBIfam" id="NF009774">
    <property type="entry name" value="PRK13271.1"/>
    <property type="match status" value="1"/>
</dbReference>
<dbReference type="PANTHER" id="PTHR23403:SF8">
    <property type="entry name" value="CYTOPLASMIC TREHALASE"/>
    <property type="match status" value="1"/>
</dbReference>
<dbReference type="PANTHER" id="PTHR23403">
    <property type="entry name" value="TREHALASE"/>
    <property type="match status" value="1"/>
</dbReference>
<dbReference type="Pfam" id="PF01204">
    <property type="entry name" value="Trehalase"/>
    <property type="match status" value="1"/>
</dbReference>
<dbReference type="PRINTS" id="PR00744">
    <property type="entry name" value="GLHYDRLASE37"/>
</dbReference>
<dbReference type="SUPFAM" id="SSF48208">
    <property type="entry name" value="Six-hairpin glycosidases"/>
    <property type="match status" value="1"/>
</dbReference>
<dbReference type="PROSITE" id="PS00927">
    <property type="entry name" value="TREHALASE_1"/>
    <property type="match status" value="1"/>
</dbReference>
<dbReference type="PROSITE" id="PS00928">
    <property type="entry name" value="TREHALASE_2"/>
    <property type="match status" value="1"/>
</dbReference>
<keyword id="KW-0963">Cytoplasm</keyword>
<keyword id="KW-0326">Glycosidase</keyword>
<keyword id="KW-0378">Hydrolase</keyword>
<organism>
    <name type="scientific">Escherichia fergusonii (strain ATCC 35469 / DSM 13698 / CCUG 18766 / IAM 14443 / JCM 21226 / LMG 7866 / NBRC 102419 / NCTC 12128 / CDC 0568-73)</name>
    <dbReference type="NCBI Taxonomy" id="585054"/>
    <lineage>
        <taxon>Bacteria</taxon>
        <taxon>Pseudomonadati</taxon>
        <taxon>Pseudomonadota</taxon>
        <taxon>Gammaproteobacteria</taxon>
        <taxon>Enterobacterales</taxon>
        <taxon>Enterobacteriaceae</taxon>
        <taxon>Escherichia</taxon>
    </lineage>
</organism>
<protein>
    <recommendedName>
        <fullName evidence="1">Cytoplasmic trehalase</fullName>
        <ecNumber evidence="1">3.2.1.28</ecNumber>
    </recommendedName>
    <alternativeName>
        <fullName evidence="1">Alpha,alpha-trehalase</fullName>
    </alternativeName>
    <alternativeName>
        <fullName evidence="1">Alpha,alpha-trehalose glucohydrolase</fullName>
    </alternativeName>
</protein>
<evidence type="ECO:0000255" key="1">
    <source>
        <dbReference type="HAMAP-Rule" id="MF_01059"/>
    </source>
</evidence>